<organism>
    <name type="scientific">Salmonella dublin (strain CT_02021853)</name>
    <dbReference type="NCBI Taxonomy" id="439851"/>
    <lineage>
        <taxon>Bacteria</taxon>
        <taxon>Pseudomonadati</taxon>
        <taxon>Pseudomonadota</taxon>
        <taxon>Gammaproteobacteria</taxon>
        <taxon>Enterobacterales</taxon>
        <taxon>Enterobacteriaceae</taxon>
        <taxon>Salmonella</taxon>
    </lineage>
</organism>
<feature type="chain" id="PRO_1000149266" description="2-isopropylmalate synthase">
    <location>
        <begin position="1"/>
        <end position="523"/>
    </location>
</feature>
<feature type="domain" description="Pyruvate carboxyltransferase" evidence="1">
    <location>
        <begin position="5"/>
        <end position="267"/>
    </location>
</feature>
<feature type="region of interest" description="Regulatory domain" evidence="1">
    <location>
        <begin position="392"/>
        <end position="523"/>
    </location>
</feature>
<feature type="binding site" evidence="1">
    <location>
        <position position="14"/>
    </location>
    <ligand>
        <name>Mn(2+)</name>
        <dbReference type="ChEBI" id="CHEBI:29035"/>
    </ligand>
</feature>
<feature type="binding site" evidence="1">
    <location>
        <position position="202"/>
    </location>
    <ligand>
        <name>Mn(2+)</name>
        <dbReference type="ChEBI" id="CHEBI:29035"/>
    </ligand>
</feature>
<feature type="binding site" evidence="1">
    <location>
        <position position="204"/>
    </location>
    <ligand>
        <name>Mn(2+)</name>
        <dbReference type="ChEBI" id="CHEBI:29035"/>
    </ligand>
</feature>
<feature type="binding site" evidence="1">
    <location>
        <position position="238"/>
    </location>
    <ligand>
        <name>Mn(2+)</name>
        <dbReference type="ChEBI" id="CHEBI:29035"/>
    </ligand>
</feature>
<name>LEU1_SALDC</name>
<proteinExistence type="inferred from homology"/>
<comment type="function">
    <text evidence="1">Catalyzes the condensation of the acetyl group of acetyl-CoA with 3-methyl-2-oxobutanoate (2-ketoisovalerate) to form 3-carboxy-3-hydroxy-4-methylpentanoate (2-isopropylmalate).</text>
</comment>
<comment type="catalytic activity">
    <reaction evidence="1">
        <text>3-methyl-2-oxobutanoate + acetyl-CoA + H2O = (2S)-2-isopropylmalate + CoA + H(+)</text>
        <dbReference type="Rhea" id="RHEA:21524"/>
        <dbReference type="ChEBI" id="CHEBI:1178"/>
        <dbReference type="ChEBI" id="CHEBI:11851"/>
        <dbReference type="ChEBI" id="CHEBI:15377"/>
        <dbReference type="ChEBI" id="CHEBI:15378"/>
        <dbReference type="ChEBI" id="CHEBI:57287"/>
        <dbReference type="ChEBI" id="CHEBI:57288"/>
        <dbReference type="EC" id="2.3.3.13"/>
    </reaction>
</comment>
<comment type="cofactor">
    <cofactor evidence="1">
        <name>Mn(2+)</name>
        <dbReference type="ChEBI" id="CHEBI:29035"/>
    </cofactor>
</comment>
<comment type="pathway">
    <text evidence="1">Amino-acid biosynthesis; L-leucine biosynthesis; L-leucine from 3-methyl-2-oxobutanoate: step 1/4.</text>
</comment>
<comment type="subunit">
    <text evidence="1">Homodimer.</text>
</comment>
<comment type="subcellular location">
    <subcellularLocation>
        <location evidence="1">Cytoplasm</location>
    </subcellularLocation>
</comment>
<comment type="similarity">
    <text evidence="1">Belongs to the alpha-IPM synthase/homocitrate synthase family. LeuA type 1 subfamily.</text>
</comment>
<reference key="1">
    <citation type="journal article" date="2011" name="J. Bacteriol.">
        <title>Comparative genomics of 28 Salmonella enterica isolates: evidence for CRISPR-mediated adaptive sublineage evolution.</title>
        <authorList>
            <person name="Fricke W.F."/>
            <person name="Mammel M.K."/>
            <person name="McDermott P.F."/>
            <person name="Tartera C."/>
            <person name="White D.G."/>
            <person name="Leclerc J.E."/>
            <person name="Ravel J."/>
            <person name="Cebula T.A."/>
        </authorList>
    </citation>
    <scope>NUCLEOTIDE SEQUENCE [LARGE SCALE GENOMIC DNA]</scope>
    <source>
        <strain>CT_02021853</strain>
    </source>
</reference>
<keyword id="KW-0028">Amino-acid biosynthesis</keyword>
<keyword id="KW-0100">Branched-chain amino acid biosynthesis</keyword>
<keyword id="KW-0963">Cytoplasm</keyword>
<keyword id="KW-0432">Leucine biosynthesis</keyword>
<keyword id="KW-0464">Manganese</keyword>
<keyword id="KW-0479">Metal-binding</keyword>
<keyword id="KW-0808">Transferase</keyword>
<dbReference type="EC" id="2.3.3.13" evidence="1"/>
<dbReference type="EMBL" id="CP001144">
    <property type="protein sequence ID" value="ACH76469.1"/>
    <property type="molecule type" value="Genomic_DNA"/>
</dbReference>
<dbReference type="RefSeq" id="WP_000082819.1">
    <property type="nucleotide sequence ID" value="NC_011205.1"/>
</dbReference>
<dbReference type="SMR" id="B5FI58"/>
<dbReference type="KEGG" id="sed:SeD_A0122"/>
<dbReference type="HOGENOM" id="CLU_022158_0_1_6"/>
<dbReference type="UniPathway" id="UPA00048">
    <property type="reaction ID" value="UER00070"/>
</dbReference>
<dbReference type="Proteomes" id="UP000008322">
    <property type="component" value="Chromosome"/>
</dbReference>
<dbReference type="GO" id="GO:0005829">
    <property type="term" value="C:cytosol"/>
    <property type="evidence" value="ECO:0007669"/>
    <property type="project" value="TreeGrafter"/>
</dbReference>
<dbReference type="GO" id="GO:0003852">
    <property type="term" value="F:2-isopropylmalate synthase activity"/>
    <property type="evidence" value="ECO:0007669"/>
    <property type="project" value="UniProtKB-UniRule"/>
</dbReference>
<dbReference type="GO" id="GO:0003985">
    <property type="term" value="F:acetyl-CoA C-acetyltransferase activity"/>
    <property type="evidence" value="ECO:0007669"/>
    <property type="project" value="UniProtKB-UniRule"/>
</dbReference>
<dbReference type="GO" id="GO:0030145">
    <property type="term" value="F:manganese ion binding"/>
    <property type="evidence" value="ECO:0007669"/>
    <property type="project" value="UniProtKB-UniRule"/>
</dbReference>
<dbReference type="GO" id="GO:0009098">
    <property type="term" value="P:L-leucine biosynthetic process"/>
    <property type="evidence" value="ECO:0007669"/>
    <property type="project" value="UniProtKB-UniRule"/>
</dbReference>
<dbReference type="CDD" id="cd07940">
    <property type="entry name" value="DRE_TIM_IPMS"/>
    <property type="match status" value="1"/>
</dbReference>
<dbReference type="FunFam" id="1.10.238.260:FF:000001">
    <property type="entry name" value="2-isopropylmalate synthase"/>
    <property type="match status" value="1"/>
</dbReference>
<dbReference type="FunFam" id="3.20.20.70:FF:000010">
    <property type="entry name" value="2-isopropylmalate synthase"/>
    <property type="match status" value="1"/>
</dbReference>
<dbReference type="FunFam" id="3.30.160.270:FF:000001">
    <property type="entry name" value="2-isopropylmalate synthase"/>
    <property type="match status" value="1"/>
</dbReference>
<dbReference type="Gene3D" id="1.10.238.260">
    <property type="match status" value="1"/>
</dbReference>
<dbReference type="Gene3D" id="3.30.160.270">
    <property type="match status" value="1"/>
</dbReference>
<dbReference type="Gene3D" id="3.20.20.70">
    <property type="entry name" value="Aldolase class I"/>
    <property type="match status" value="1"/>
</dbReference>
<dbReference type="HAMAP" id="MF_01025">
    <property type="entry name" value="LeuA_type1"/>
    <property type="match status" value="1"/>
</dbReference>
<dbReference type="InterPro" id="IPR050073">
    <property type="entry name" value="2-IPM_HCS-like"/>
</dbReference>
<dbReference type="InterPro" id="IPR013709">
    <property type="entry name" value="2-isopropylmalate_synth_dimer"/>
</dbReference>
<dbReference type="InterPro" id="IPR002034">
    <property type="entry name" value="AIPM/Hcit_synth_CS"/>
</dbReference>
<dbReference type="InterPro" id="IPR013785">
    <property type="entry name" value="Aldolase_TIM"/>
</dbReference>
<dbReference type="InterPro" id="IPR054691">
    <property type="entry name" value="LeuA/HCS_post-cat"/>
</dbReference>
<dbReference type="InterPro" id="IPR036230">
    <property type="entry name" value="LeuA_allosteric_dom_sf"/>
</dbReference>
<dbReference type="InterPro" id="IPR005671">
    <property type="entry name" value="LeuA_bact_synth"/>
</dbReference>
<dbReference type="InterPro" id="IPR000891">
    <property type="entry name" value="PYR_CT"/>
</dbReference>
<dbReference type="NCBIfam" id="TIGR00973">
    <property type="entry name" value="leuA_bact"/>
    <property type="match status" value="1"/>
</dbReference>
<dbReference type="NCBIfam" id="NF002084">
    <property type="entry name" value="PRK00915.1-1"/>
    <property type="match status" value="1"/>
</dbReference>
<dbReference type="NCBIfam" id="NF002086">
    <property type="entry name" value="PRK00915.1-3"/>
    <property type="match status" value="1"/>
</dbReference>
<dbReference type="PANTHER" id="PTHR10277:SF9">
    <property type="entry name" value="2-ISOPROPYLMALATE SYNTHASE 1, CHLOROPLASTIC-RELATED"/>
    <property type="match status" value="1"/>
</dbReference>
<dbReference type="PANTHER" id="PTHR10277">
    <property type="entry name" value="HOMOCITRATE SYNTHASE-RELATED"/>
    <property type="match status" value="1"/>
</dbReference>
<dbReference type="Pfam" id="PF22617">
    <property type="entry name" value="HCS_D2"/>
    <property type="match status" value="1"/>
</dbReference>
<dbReference type="Pfam" id="PF00682">
    <property type="entry name" value="HMGL-like"/>
    <property type="match status" value="1"/>
</dbReference>
<dbReference type="Pfam" id="PF08502">
    <property type="entry name" value="LeuA_dimer"/>
    <property type="match status" value="1"/>
</dbReference>
<dbReference type="SMART" id="SM00917">
    <property type="entry name" value="LeuA_dimer"/>
    <property type="match status" value="1"/>
</dbReference>
<dbReference type="SUPFAM" id="SSF110921">
    <property type="entry name" value="2-isopropylmalate synthase LeuA, allosteric (dimerisation) domain"/>
    <property type="match status" value="1"/>
</dbReference>
<dbReference type="SUPFAM" id="SSF51569">
    <property type="entry name" value="Aldolase"/>
    <property type="match status" value="1"/>
</dbReference>
<dbReference type="PROSITE" id="PS00815">
    <property type="entry name" value="AIPM_HOMOCIT_SYNTH_1"/>
    <property type="match status" value="1"/>
</dbReference>
<dbReference type="PROSITE" id="PS00816">
    <property type="entry name" value="AIPM_HOMOCIT_SYNTH_2"/>
    <property type="match status" value="1"/>
</dbReference>
<dbReference type="PROSITE" id="PS50991">
    <property type="entry name" value="PYR_CT"/>
    <property type="match status" value="1"/>
</dbReference>
<gene>
    <name evidence="1" type="primary">leuA</name>
    <name type="ordered locus">SeD_A0122</name>
</gene>
<sequence>MSQQVIIFDTTLRDGEQALQASLSAKEKLQIALALERMGVDVMEVGFPVSSPGDFESVQTIARTIKNSRVCALARCVEKDIDVAAQALKVADAFRIHTFIATSPMHIATKLRSTLDEVIERAVYMVKRARNYTDDVEFSCEDAGRTPVDDLARVVEAAINAGARTINIPDTVGYTMPFEFAGIISGLYERVPNIDKAIISVHTHDDLGIAVGNSLAAVHAGARQVEGAMNGIGERAGNCALEEVIMAIKVRKDIMNVHTNINHHEIWRTSQTVSQICNMPIPANKAIVGSGAFAHSSGIHQDGVLKNRENYEIMTPESIGLNQIQLNLTSRSGRAAVKHRMEEMGYKDTDYNMDHLYDAFLKLADKKGQVFDYDLEALAFINKQQEEPEHFRLDYFSVQSGSSDIATASVKLACGEEIKAEAANGNGPVDAIYQAINRITGYDVELVKYDLNAKGQGKDALGQVDIVVNHHGRRFHGVGLATDIVESSAKAMVHVLNNIWRAAEVEKELQRKAQNKENNKETV</sequence>
<evidence type="ECO:0000255" key="1">
    <source>
        <dbReference type="HAMAP-Rule" id="MF_01025"/>
    </source>
</evidence>
<protein>
    <recommendedName>
        <fullName evidence="1">2-isopropylmalate synthase</fullName>
        <ecNumber evidence="1">2.3.3.13</ecNumber>
    </recommendedName>
    <alternativeName>
        <fullName evidence="1">Alpha-IPM synthase</fullName>
    </alternativeName>
    <alternativeName>
        <fullName evidence="1">Alpha-isopropylmalate synthase</fullName>
    </alternativeName>
</protein>
<accession>B5FI58</accession>